<keyword id="KW-0067">ATP-binding</keyword>
<keyword id="KW-0170">Cobalt</keyword>
<keyword id="KW-0963">Cytoplasm</keyword>
<keyword id="KW-0460">Magnesium</keyword>
<keyword id="KW-0479">Metal-binding</keyword>
<keyword id="KW-0547">Nucleotide-binding</keyword>
<keyword id="KW-0554">One-carbon metabolism</keyword>
<keyword id="KW-0630">Potassium</keyword>
<keyword id="KW-1185">Reference proteome</keyword>
<keyword id="KW-0808">Transferase</keyword>
<organism>
    <name type="scientific">Populus trichocarpa</name>
    <name type="common">Western balsam poplar</name>
    <name type="synonym">Populus balsamifera subsp. trichocarpa</name>
    <dbReference type="NCBI Taxonomy" id="3694"/>
    <lineage>
        <taxon>Eukaryota</taxon>
        <taxon>Viridiplantae</taxon>
        <taxon>Streptophyta</taxon>
        <taxon>Embryophyta</taxon>
        <taxon>Tracheophyta</taxon>
        <taxon>Spermatophyta</taxon>
        <taxon>Magnoliopsida</taxon>
        <taxon>eudicotyledons</taxon>
        <taxon>Gunneridae</taxon>
        <taxon>Pentapetalae</taxon>
        <taxon>rosids</taxon>
        <taxon>fabids</taxon>
        <taxon>Malpighiales</taxon>
        <taxon>Salicaceae</taxon>
        <taxon>Saliceae</taxon>
        <taxon>Populus</taxon>
    </lineage>
</organism>
<dbReference type="EC" id="2.5.1.6" evidence="5"/>
<dbReference type="EMBL" id="CM009297">
    <property type="protein sequence ID" value="ERP57494.1"/>
    <property type="molecule type" value="Genomic_DNA"/>
</dbReference>
<dbReference type="EMBL" id="EF146764">
    <property type="protein sequence ID" value="ABK94811.1"/>
    <property type="molecule type" value="mRNA"/>
</dbReference>
<dbReference type="RefSeq" id="XP_006379697.1">
    <property type="nucleotide sequence ID" value="XM_006379635.1"/>
</dbReference>
<dbReference type="SMR" id="A9PEK8"/>
<dbReference type="STRING" id="3694.A9PEK8"/>
<dbReference type="GeneID" id="7498224"/>
<dbReference type="KEGG" id="pop:7498224"/>
<dbReference type="eggNOG" id="KOG1506">
    <property type="taxonomic scope" value="Eukaryota"/>
</dbReference>
<dbReference type="HOGENOM" id="CLU_041802_1_1_1"/>
<dbReference type="InParanoid" id="A9PEK8"/>
<dbReference type="OrthoDB" id="5852090at2759"/>
<dbReference type="UniPathway" id="UPA00315">
    <property type="reaction ID" value="UER00080"/>
</dbReference>
<dbReference type="Proteomes" id="UP000006729">
    <property type="component" value="Chromosome 8"/>
</dbReference>
<dbReference type="ExpressionAtlas" id="A9PEK8">
    <property type="expression patterns" value="differential"/>
</dbReference>
<dbReference type="GO" id="GO:0005829">
    <property type="term" value="C:cytosol"/>
    <property type="evidence" value="ECO:0000318"/>
    <property type="project" value="GO_Central"/>
</dbReference>
<dbReference type="GO" id="GO:0005524">
    <property type="term" value="F:ATP binding"/>
    <property type="evidence" value="ECO:0007669"/>
    <property type="project" value="UniProtKB-KW"/>
</dbReference>
<dbReference type="GO" id="GO:0046872">
    <property type="term" value="F:metal ion binding"/>
    <property type="evidence" value="ECO:0007669"/>
    <property type="project" value="UniProtKB-KW"/>
</dbReference>
<dbReference type="GO" id="GO:0004478">
    <property type="term" value="F:methionine adenosyltransferase activity"/>
    <property type="evidence" value="ECO:0000318"/>
    <property type="project" value="GO_Central"/>
</dbReference>
<dbReference type="GO" id="GO:0006730">
    <property type="term" value="P:one-carbon metabolic process"/>
    <property type="evidence" value="ECO:0007669"/>
    <property type="project" value="UniProtKB-KW"/>
</dbReference>
<dbReference type="GO" id="GO:0006556">
    <property type="term" value="P:S-adenosylmethionine biosynthetic process"/>
    <property type="evidence" value="ECO:0000318"/>
    <property type="project" value="GO_Central"/>
</dbReference>
<dbReference type="CDD" id="cd18079">
    <property type="entry name" value="S-AdoMet_synt"/>
    <property type="match status" value="1"/>
</dbReference>
<dbReference type="FunFam" id="3.30.300.10:FF:000001">
    <property type="entry name" value="S-adenosylmethionine synthase"/>
    <property type="match status" value="1"/>
</dbReference>
<dbReference type="FunFam" id="3.30.300.10:FF:000003">
    <property type="entry name" value="S-adenosylmethionine synthase"/>
    <property type="match status" value="1"/>
</dbReference>
<dbReference type="FunFam" id="3.30.300.10:FF:000004">
    <property type="entry name" value="S-adenosylmethionine synthase"/>
    <property type="match status" value="1"/>
</dbReference>
<dbReference type="Gene3D" id="3.30.300.10">
    <property type="match status" value="3"/>
</dbReference>
<dbReference type="HAMAP" id="MF_00086">
    <property type="entry name" value="S_AdoMet_synth1"/>
    <property type="match status" value="1"/>
</dbReference>
<dbReference type="InterPro" id="IPR022631">
    <property type="entry name" value="ADOMET_SYNTHASE_CS"/>
</dbReference>
<dbReference type="InterPro" id="IPR022630">
    <property type="entry name" value="S-AdoMet_synt_C"/>
</dbReference>
<dbReference type="InterPro" id="IPR022629">
    <property type="entry name" value="S-AdoMet_synt_central"/>
</dbReference>
<dbReference type="InterPro" id="IPR022628">
    <property type="entry name" value="S-AdoMet_synt_N"/>
</dbReference>
<dbReference type="InterPro" id="IPR002133">
    <property type="entry name" value="S-AdoMet_synthetase"/>
</dbReference>
<dbReference type="InterPro" id="IPR022636">
    <property type="entry name" value="S-AdoMet_synthetase_sfam"/>
</dbReference>
<dbReference type="NCBIfam" id="TIGR01034">
    <property type="entry name" value="metK"/>
    <property type="match status" value="1"/>
</dbReference>
<dbReference type="PANTHER" id="PTHR11964">
    <property type="entry name" value="S-ADENOSYLMETHIONINE SYNTHETASE"/>
    <property type="match status" value="1"/>
</dbReference>
<dbReference type="Pfam" id="PF02773">
    <property type="entry name" value="S-AdoMet_synt_C"/>
    <property type="match status" value="1"/>
</dbReference>
<dbReference type="Pfam" id="PF02772">
    <property type="entry name" value="S-AdoMet_synt_M"/>
    <property type="match status" value="1"/>
</dbReference>
<dbReference type="Pfam" id="PF00438">
    <property type="entry name" value="S-AdoMet_synt_N"/>
    <property type="match status" value="1"/>
</dbReference>
<dbReference type="PIRSF" id="PIRSF000497">
    <property type="entry name" value="MAT"/>
    <property type="match status" value="1"/>
</dbReference>
<dbReference type="SUPFAM" id="SSF55973">
    <property type="entry name" value="S-adenosylmethionine synthetase"/>
    <property type="match status" value="3"/>
</dbReference>
<dbReference type="PROSITE" id="PS00376">
    <property type="entry name" value="ADOMET_SYNTHASE_1"/>
    <property type="match status" value="1"/>
</dbReference>
<dbReference type="PROSITE" id="PS00377">
    <property type="entry name" value="ADOMET_SYNTHASE_2"/>
    <property type="match status" value="1"/>
</dbReference>
<proteinExistence type="evidence at transcript level"/>
<gene>
    <name type="primary">METK3</name>
    <name type="ORF">POPTR_0008s09870g</name>
</gene>
<protein>
    <recommendedName>
        <fullName>S-adenosylmethionine synthase 3</fullName>
        <shortName>AdoMet synthase 3</shortName>
        <ecNumber evidence="5">2.5.1.6</ecNumber>
    </recommendedName>
    <alternativeName>
        <fullName>Methionine adenosyltransferase 3</fullName>
        <shortName>MAT 3</shortName>
    </alternativeName>
</protein>
<accession>A9PEK8</accession>
<accession>U5G586</accession>
<name>METK3_POPTR</name>
<sequence length="395" mass="43170">MAETFLFTSESVNEGHPDKLCDQISDAVLDACLAQDPDSKVACETCTKTNMVMVFGEITTKADVDYEKIVRDTCRNIGFTSADVGLDADNCKVLVNIEQQSPDIAQGVHGHFSKRPEEIGAGDQGHMFGYATDETPELMPLSHVLATKLGARLTEVRKNGTCAWLRPDGKTQVTVEYYNENGAMVPVRVHTVLISTQHDETVTNDEIAADLKEHVIKPVIPEKYLDEKTIFHLNPSGRFVIGGPHGDAGLTGRKIIIDTYGGWGAHGGGAFSGKDPTKVDRSGAYIVRQAAKSIVASGLARRCIVQVSYAIGVPEPLSVFVDTYGTGKIPDKEILQIVKESFDFRPGMISINLDLKRGGNSRFLKTAAYGHFGRDDPDFTWEVVKPLKWDNKVQA</sequence>
<reference key="1">
    <citation type="journal article" date="2006" name="Science">
        <title>The genome of black cottonwood, Populus trichocarpa (Torr. &amp; Gray).</title>
        <authorList>
            <person name="Tuskan G.A."/>
            <person name="Difazio S."/>
            <person name="Jansson S."/>
            <person name="Bohlmann J."/>
            <person name="Grigoriev I."/>
            <person name="Hellsten U."/>
            <person name="Putnam N."/>
            <person name="Ralph S."/>
            <person name="Rombauts S."/>
            <person name="Salamov A."/>
            <person name="Schein J."/>
            <person name="Sterck L."/>
            <person name="Aerts A."/>
            <person name="Bhalerao R.R."/>
            <person name="Bhalerao R.P."/>
            <person name="Blaudez D."/>
            <person name="Boerjan W."/>
            <person name="Brun A."/>
            <person name="Brunner A."/>
            <person name="Busov V."/>
            <person name="Campbell M."/>
            <person name="Carlson J."/>
            <person name="Chalot M."/>
            <person name="Chapman J."/>
            <person name="Chen G.-L."/>
            <person name="Cooper D."/>
            <person name="Coutinho P.M."/>
            <person name="Couturier J."/>
            <person name="Covert S."/>
            <person name="Cronk Q."/>
            <person name="Cunningham R."/>
            <person name="Davis J."/>
            <person name="Degroeve S."/>
            <person name="Dejardin A."/>
            <person name="dePamphilis C.W."/>
            <person name="Detter J."/>
            <person name="Dirks B."/>
            <person name="Dubchak I."/>
            <person name="Duplessis S."/>
            <person name="Ehlting J."/>
            <person name="Ellis B."/>
            <person name="Gendler K."/>
            <person name="Goodstein D."/>
            <person name="Gribskov M."/>
            <person name="Grimwood J."/>
            <person name="Groover A."/>
            <person name="Gunter L."/>
            <person name="Hamberger B."/>
            <person name="Heinze B."/>
            <person name="Helariutta Y."/>
            <person name="Henrissat B."/>
            <person name="Holligan D."/>
            <person name="Holt R."/>
            <person name="Huang W."/>
            <person name="Islam-Faridi N."/>
            <person name="Jones S."/>
            <person name="Jones-Rhoades M."/>
            <person name="Jorgensen R."/>
            <person name="Joshi C."/>
            <person name="Kangasjaervi J."/>
            <person name="Karlsson J."/>
            <person name="Kelleher C."/>
            <person name="Kirkpatrick R."/>
            <person name="Kirst M."/>
            <person name="Kohler A."/>
            <person name="Kalluri U."/>
            <person name="Larimer F."/>
            <person name="Leebens-Mack J."/>
            <person name="Leple J.-C."/>
            <person name="Locascio P."/>
            <person name="Lou Y."/>
            <person name="Lucas S."/>
            <person name="Martin F."/>
            <person name="Montanini B."/>
            <person name="Napoli C."/>
            <person name="Nelson D.R."/>
            <person name="Nelson C."/>
            <person name="Nieminen K."/>
            <person name="Nilsson O."/>
            <person name="Pereda V."/>
            <person name="Peter G."/>
            <person name="Philippe R."/>
            <person name="Pilate G."/>
            <person name="Poliakov A."/>
            <person name="Razumovskaya J."/>
            <person name="Richardson P."/>
            <person name="Rinaldi C."/>
            <person name="Ritland K."/>
            <person name="Rouze P."/>
            <person name="Ryaboy D."/>
            <person name="Schmutz J."/>
            <person name="Schrader J."/>
            <person name="Segerman B."/>
            <person name="Shin H."/>
            <person name="Siddiqui A."/>
            <person name="Sterky F."/>
            <person name="Terry A."/>
            <person name="Tsai C.-J."/>
            <person name="Uberbacher E."/>
            <person name="Unneberg P."/>
            <person name="Vahala J."/>
            <person name="Wall K."/>
            <person name="Wessler S."/>
            <person name="Yang G."/>
            <person name="Yin T."/>
            <person name="Douglas C."/>
            <person name="Marra M."/>
            <person name="Sandberg G."/>
            <person name="Van de Peer Y."/>
            <person name="Rokhsar D.S."/>
        </authorList>
    </citation>
    <scope>NUCLEOTIDE SEQUENCE [LARGE SCALE GENOMIC DNA]</scope>
    <source>
        <strain>cv. Nisqually</strain>
    </source>
</reference>
<reference key="2">
    <citation type="submission" date="2006-11" db="EMBL/GenBank/DDBJ databases">
        <title>The poplar transcriptome: Analysis of ca. 4,700 sequence-verified full-length cDNAs.</title>
        <authorList>
            <person name="Ralph S.G."/>
            <person name="Chun H.J.E."/>
            <person name="Cooper D."/>
            <person name="Kirkpatrick R."/>
            <person name="Palmquist D."/>
            <person name="Wynhoven B."/>
            <person name="Kolosova N."/>
            <person name="Oddy C."/>
            <person name="Jancsik S."/>
            <person name="Douglas C.J."/>
            <person name="Liu J."/>
            <person name="Butterfield Y.S.N."/>
            <person name="Stott J."/>
            <person name="Yang G."/>
            <person name="Holt R.A."/>
            <person name="Siddiqui A."/>
            <person name="Jones S.J.M."/>
            <person name="Marra M.A."/>
            <person name="Ritland K."/>
            <person name="Bohlmann J."/>
        </authorList>
    </citation>
    <scope>NUCLEOTIDE SEQUENCE [LARGE SCALE MRNA]</scope>
    <source>
        <strain>cv. Nisqually</strain>
        <tissue>Leaf</tissue>
    </source>
</reference>
<feature type="chain" id="PRO_0000363044" description="S-adenosylmethionine synthase 3">
    <location>
        <begin position="1"/>
        <end position="395"/>
    </location>
</feature>
<feature type="binding site" evidence="3">
    <location>
        <position position="10"/>
    </location>
    <ligand>
        <name>Mg(2+)</name>
        <dbReference type="ChEBI" id="CHEBI:18420"/>
    </ligand>
</feature>
<feature type="binding site" description="in other chain" evidence="4">
    <location>
        <position position="16"/>
    </location>
    <ligand>
        <name>ATP</name>
        <dbReference type="ChEBI" id="CHEBI:30616"/>
        <note>ligand shared between two neighboring subunits</note>
    </ligand>
</feature>
<feature type="binding site" evidence="2">
    <location>
        <position position="44"/>
    </location>
    <ligand>
        <name>K(+)</name>
        <dbReference type="ChEBI" id="CHEBI:29103"/>
    </ligand>
</feature>
<feature type="binding site" description="in other chain" evidence="2">
    <location>
        <position position="57"/>
    </location>
    <ligand>
        <name>L-methionine</name>
        <dbReference type="ChEBI" id="CHEBI:57844"/>
        <note>ligand shared between two neighboring subunits</note>
    </ligand>
</feature>
<feature type="binding site" description="in other chain" evidence="2">
    <location>
        <position position="100"/>
    </location>
    <ligand>
        <name>L-methionine</name>
        <dbReference type="ChEBI" id="CHEBI:57844"/>
        <note>ligand shared between two neighboring subunits</note>
    </ligand>
</feature>
<feature type="binding site" description="in other chain" evidence="4">
    <location>
        <begin position="168"/>
        <end position="170"/>
    </location>
    <ligand>
        <name>ATP</name>
        <dbReference type="ChEBI" id="CHEBI:30616"/>
        <note>ligand shared between two neighboring subunits</note>
    </ligand>
</feature>
<feature type="binding site" description="in other chain" evidence="4">
    <location>
        <begin position="236"/>
        <end position="239"/>
    </location>
    <ligand>
        <name>ATP</name>
        <dbReference type="ChEBI" id="CHEBI:30616"/>
        <note>ligand shared between two neighboring subunits</note>
    </ligand>
</feature>
<feature type="binding site" description="in other chain" evidence="4">
    <location>
        <position position="247"/>
    </location>
    <ligand>
        <name>ATP</name>
        <dbReference type="ChEBI" id="CHEBI:30616"/>
        <note>ligand shared between two neighboring subunits</note>
    </ligand>
</feature>
<feature type="binding site" evidence="2">
    <location>
        <position position="247"/>
    </location>
    <ligand>
        <name>L-methionine</name>
        <dbReference type="ChEBI" id="CHEBI:57844"/>
        <note>ligand shared between two neighboring subunits</note>
    </ligand>
</feature>
<feature type="binding site" description="in other chain" evidence="2">
    <location>
        <begin position="253"/>
        <end position="254"/>
    </location>
    <ligand>
        <name>ATP</name>
        <dbReference type="ChEBI" id="CHEBI:30616"/>
        <note>ligand shared between two neighboring subunits</note>
    </ligand>
</feature>
<feature type="binding site" evidence="2">
    <location>
        <position position="270"/>
    </location>
    <ligand>
        <name>ATP</name>
        <dbReference type="ChEBI" id="CHEBI:30616"/>
        <note>ligand shared between two neighboring subunits</note>
    </ligand>
</feature>
<feature type="binding site" evidence="2">
    <location>
        <position position="274"/>
    </location>
    <ligand>
        <name>ATP</name>
        <dbReference type="ChEBI" id="CHEBI:30616"/>
        <note>ligand shared between two neighboring subunits</note>
    </ligand>
</feature>
<feature type="binding site" evidence="3">
    <location>
        <position position="278"/>
    </location>
    <ligand>
        <name>ATP</name>
        <dbReference type="ChEBI" id="CHEBI:30616"/>
        <note>ligand shared between two neighboring subunits</note>
    </ligand>
</feature>
<feature type="binding site" description="in other chain" evidence="2">
    <location>
        <position position="278"/>
    </location>
    <ligand>
        <name>L-methionine</name>
        <dbReference type="ChEBI" id="CHEBI:57844"/>
        <note>ligand shared between two neighboring subunits</note>
    </ligand>
</feature>
<comment type="function">
    <text evidence="5">Catalyzes the formation of S-adenosylmethionine from methionine and ATP. The reaction comprises two steps that are both catalyzed by the same enzyme: formation of S-adenosylmethionine (AdoMet) and triphosphate, and subsequent hydrolysis of the triphosphate.</text>
</comment>
<comment type="catalytic activity">
    <reaction evidence="5">
        <text>L-methionine + ATP + H2O = S-adenosyl-L-methionine + phosphate + diphosphate</text>
        <dbReference type="Rhea" id="RHEA:21080"/>
        <dbReference type="ChEBI" id="CHEBI:15377"/>
        <dbReference type="ChEBI" id="CHEBI:30616"/>
        <dbReference type="ChEBI" id="CHEBI:33019"/>
        <dbReference type="ChEBI" id="CHEBI:43474"/>
        <dbReference type="ChEBI" id="CHEBI:57844"/>
        <dbReference type="ChEBI" id="CHEBI:59789"/>
        <dbReference type="EC" id="2.5.1.6"/>
    </reaction>
</comment>
<comment type="cofactor">
    <cofactor evidence="5">
        <name>Mn(2+)</name>
        <dbReference type="ChEBI" id="CHEBI:29035"/>
    </cofactor>
    <cofactor evidence="5">
        <name>Mg(2+)</name>
        <dbReference type="ChEBI" id="CHEBI:18420"/>
    </cofactor>
    <cofactor evidence="5">
        <name>Co(2+)</name>
        <dbReference type="ChEBI" id="CHEBI:48828"/>
    </cofactor>
    <text evidence="3 5">Binds 2 divalent ions per subunit. The metal ions interact primarily with the substrate (By similarity). Can utilize magnesium, manganese or cobalt (in vitro) (By similarity).</text>
</comment>
<comment type="cofactor">
    <cofactor evidence="5">
        <name>K(+)</name>
        <dbReference type="ChEBI" id="CHEBI:29103"/>
    </cofactor>
    <text evidence="3">Binds 1 potassium ion per subunit. The potassium ion interacts primarily with the substrate (By similarity).</text>
</comment>
<comment type="pathway">
    <text evidence="5">Amino-acid biosynthesis; S-adenosyl-L-methionine biosynthesis; S-adenosyl-L-methionine from L-methionine: step 1/1.</text>
</comment>
<comment type="subunit">
    <text evidence="1">Homotetramer.</text>
</comment>
<comment type="subcellular location">
    <subcellularLocation>
        <location evidence="1">Cytoplasm</location>
    </subcellularLocation>
</comment>
<comment type="similarity">
    <text evidence="6">Belongs to the AdoMet synthase family.</text>
</comment>
<evidence type="ECO:0000250" key="1"/>
<evidence type="ECO:0000250" key="2">
    <source>
        <dbReference type="UniProtKB" id="P0A817"/>
    </source>
</evidence>
<evidence type="ECO:0000250" key="3">
    <source>
        <dbReference type="UniProtKB" id="P13444"/>
    </source>
</evidence>
<evidence type="ECO:0000250" key="4">
    <source>
        <dbReference type="UniProtKB" id="Q00266"/>
    </source>
</evidence>
<evidence type="ECO:0000250" key="5">
    <source>
        <dbReference type="UniProtKB" id="Q96551"/>
    </source>
</evidence>
<evidence type="ECO:0000305" key="6"/>